<sequence length="423" mass="47835">MDSLTAANNKFCFDFFREISKDDAHKNIFVCPLSLSAAFGMVRLGARGDSAHQIDEALHFNELSKDEHKEPNDPSPQSESKASDSSLEGQKQTSASQDQQGESTNDHQLLGCHFGKLLSRIDRDKSYYTLSMANRLYGEQEFPICSEYSDDVTEFFHTTVESVDFQKDSEKSRQEINFWVESQSQGKIKELFGKEAIDNSTVLVLVNAVYFKAKWEREFNSENTVDASFCLNENEKKTVKMMNQKGKFRIGFIDELQAQILEMKYAMGKLSMLVLLPSCSEDNVNSLQELEKKINHEKLLAWSSSENLSEKPVAISFPQFNLEDSYDLKSILQDMGIKDVFDETKADLTGISKSPNLYLSKIVHKTFVEVDEMGTQAAAASGVVAAEKALPSWVEFNANHPFLFFIRHNPTQSLLFCGRVYCP</sequence>
<comment type="function">
    <text evidence="2">Inhibits trypsin and plasmin, but not thrombin, coagulation factor Xa, or urokinase-type plasminogen activator. May play a role in cell differentiation.</text>
</comment>
<comment type="subunit">
    <text evidence="2">Interacts with SLFN12; as part of a pathway regulating cell differentiation.</text>
</comment>
<comment type="subcellular location">
    <subcellularLocation>
        <location evidence="1">Cytoplasm</location>
    </subcellularLocation>
</comment>
<comment type="similarity">
    <text evidence="4">Belongs to the serpin family. Ov-serpin subfamily.</text>
</comment>
<feature type="chain" id="PRO_0000094120" description="Serpin B12">
    <location>
        <begin position="1"/>
        <end position="423"/>
    </location>
</feature>
<feature type="region of interest" description="Disordered" evidence="3">
    <location>
        <begin position="63"/>
        <end position="106"/>
    </location>
</feature>
<feature type="compositionally biased region" description="Basic and acidic residues" evidence="3">
    <location>
        <begin position="63"/>
        <end position="72"/>
    </location>
</feature>
<feature type="compositionally biased region" description="Polar residues" evidence="3">
    <location>
        <begin position="75"/>
        <end position="106"/>
    </location>
</feature>
<feature type="site" description="Reactive bond" evidence="1">
    <location>
        <begin position="388"/>
        <end position="389"/>
    </location>
</feature>
<feature type="sequence conflict" description="In Ref. 1; AAR89287." evidence="4" ref="1">
    <original>E</original>
    <variation>G</variation>
    <location>
        <position position="67"/>
    </location>
</feature>
<proteinExistence type="evidence at transcript level"/>
<dbReference type="EMBL" id="AY367773">
    <property type="protein sequence ID" value="AAR89287.1"/>
    <property type="molecule type" value="mRNA"/>
</dbReference>
<dbReference type="EMBL" id="AK009018">
    <property type="protein sequence ID" value="BAB26028.1"/>
    <property type="molecule type" value="mRNA"/>
</dbReference>
<dbReference type="EMBL" id="AK040697">
    <property type="protein sequence ID" value="BAC30672.1"/>
    <property type="molecule type" value="mRNA"/>
</dbReference>
<dbReference type="EMBL" id="BC062134">
    <property type="protein sequence ID" value="AAH62134.1"/>
    <property type="molecule type" value="mRNA"/>
</dbReference>
<dbReference type="CCDS" id="CCDS15212.1"/>
<dbReference type="RefSeq" id="NP_001186142.1">
    <property type="nucleotide sequence ID" value="NM_001199213.3"/>
</dbReference>
<dbReference type="RefSeq" id="NP_082247.1">
    <property type="nucleotide sequence ID" value="NM_027971.4"/>
</dbReference>
<dbReference type="SMR" id="Q9D7P9"/>
<dbReference type="FunCoup" id="Q9D7P9">
    <property type="interactions" value="76"/>
</dbReference>
<dbReference type="STRING" id="10090.ENSMUSP00000080030"/>
<dbReference type="MEROPS" id="I04.016"/>
<dbReference type="iPTMnet" id="Q9D7P9"/>
<dbReference type="PhosphoSitePlus" id="Q9D7P9"/>
<dbReference type="jPOST" id="Q9D7P9"/>
<dbReference type="PaxDb" id="10090-ENSMUSP00000080030"/>
<dbReference type="ProteomicsDB" id="261493"/>
<dbReference type="Antibodypedia" id="10036">
    <property type="antibodies" value="201 antibodies from 23 providers"/>
</dbReference>
<dbReference type="DNASU" id="71869"/>
<dbReference type="Ensembl" id="ENSMUST00000081277.9">
    <property type="protein sequence ID" value="ENSMUSP00000080030.3"/>
    <property type="gene ID" value="ENSMUSG00000059956.15"/>
</dbReference>
<dbReference type="Ensembl" id="ENSMUST00000112724.3">
    <property type="protein sequence ID" value="ENSMUSP00000108344.3"/>
    <property type="gene ID" value="ENSMUSG00000059956.15"/>
</dbReference>
<dbReference type="GeneID" id="71869"/>
<dbReference type="KEGG" id="mmu:71869"/>
<dbReference type="UCSC" id="uc007chc.2">
    <property type="organism name" value="mouse"/>
</dbReference>
<dbReference type="AGR" id="MGI:1919119"/>
<dbReference type="CTD" id="89777"/>
<dbReference type="MGI" id="MGI:1919119">
    <property type="gene designation" value="Serpinb12"/>
</dbReference>
<dbReference type="VEuPathDB" id="HostDB:ENSMUSG00000059956"/>
<dbReference type="eggNOG" id="KOG2392">
    <property type="taxonomic scope" value="Eukaryota"/>
</dbReference>
<dbReference type="GeneTree" id="ENSGT00940000161829"/>
<dbReference type="HOGENOM" id="CLU_023330_0_2_1"/>
<dbReference type="InParanoid" id="Q9D7P9"/>
<dbReference type="OMA" id="CYFGKLL"/>
<dbReference type="OrthoDB" id="671595at2759"/>
<dbReference type="PhylomeDB" id="Q9D7P9"/>
<dbReference type="TreeFam" id="TF352619"/>
<dbReference type="Reactome" id="R-MMU-6798695">
    <property type="pathway name" value="Neutrophil degranulation"/>
</dbReference>
<dbReference type="BioGRID-ORCS" id="71869">
    <property type="hits" value="1 hit in 76 CRISPR screens"/>
</dbReference>
<dbReference type="PRO" id="PR:Q9D7P9"/>
<dbReference type="Proteomes" id="UP000000589">
    <property type="component" value="Chromosome 1"/>
</dbReference>
<dbReference type="RNAct" id="Q9D7P9">
    <property type="molecule type" value="protein"/>
</dbReference>
<dbReference type="Bgee" id="ENSMUSG00000059956">
    <property type="expression patterns" value="Expressed in esophagus and 43 other cell types or tissues"/>
</dbReference>
<dbReference type="GO" id="GO:0001533">
    <property type="term" value="C:cornified envelope"/>
    <property type="evidence" value="ECO:0000314"/>
    <property type="project" value="MGI"/>
</dbReference>
<dbReference type="GO" id="GO:0005737">
    <property type="term" value="C:cytoplasm"/>
    <property type="evidence" value="ECO:0007669"/>
    <property type="project" value="UniProtKB-SubCell"/>
</dbReference>
<dbReference type="GO" id="GO:0005615">
    <property type="term" value="C:extracellular space"/>
    <property type="evidence" value="ECO:0007669"/>
    <property type="project" value="InterPro"/>
</dbReference>
<dbReference type="GO" id="GO:0004867">
    <property type="term" value="F:serine-type endopeptidase inhibitor activity"/>
    <property type="evidence" value="ECO:0000250"/>
    <property type="project" value="UniProtKB"/>
</dbReference>
<dbReference type="GO" id="GO:0002244">
    <property type="term" value="P:hematopoietic progenitor cell differentiation"/>
    <property type="evidence" value="ECO:0000315"/>
    <property type="project" value="MGI"/>
</dbReference>
<dbReference type="CDD" id="cd19571">
    <property type="entry name" value="serpinB12_yukopin"/>
    <property type="match status" value="1"/>
</dbReference>
<dbReference type="FunFam" id="2.30.39.10:FF:000050">
    <property type="entry name" value="Heterochromatin-associated protein MENT"/>
    <property type="match status" value="1"/>
</dbReference>
<dbReference type="Gene3D" id="2.30.39.10">
    <property type="entry name" value="Alpha-1-antitrypsin, domain 1"/>
    <property type="match status" value="1"/>
</dbReference>
<dbReference type="Gene3D" id="3.30.497.10">
    <property type="entry name" value="Antithrombin, subunit I, domain 2"/>
    <property type="match status" value="1"/>
</dbReference>
<dbReference type="InterPro" id="IPR023795">
    <property type="entry name" value="Serpin_CS"/>
</dbReference>
<dbReference type="InterPro" id="IPR023796">
    <property type="entry name" value="Serpin_dom"/>
</dbReference>
<dbReference type="InterPro" id="IPR000215">
    <property type="entry name" value="Serpin_fam"/>
</dbReference>
<dbReference type="InterPro" id="IPR036186">
    <property type="entry name" value="Serpin_sf"/>
</dbReference>
<dbReference type="InterPro" id="IPR042178">
    <property type="entry name" value="Serpin_sf_1"/>
</dbReference>
<dbReference type="InterPro" id="IPR042185">
    <property type="entry name" value="Serpin_sf_2"/>
</dbReference>
<dbReference type="PANTHER" id="PTHR11461">
    <property type="entry name" value="SERINE PROTEASE INHIBITOR, SERPIN"/>
    <property type="match status" value="1"/>
</dbReference>
<dbReference type="PANTHER" id="PTHR11461:SF125">
    <property type="entry name" value="SERPIN B12"/>
    <property type="match status" value="1"/>
</dbReference>
<dbReference type="Pfam" id="PF00079">
    <property type="entry name" value="Serpin"/>
    <property type="match status" value="1"/>
</dbReference>
<dbReference type="SMART" id="SM00093">
    <property type="entry name" value="SERPIN"/>
    <property type="match status" value="1"/>
</dbReference>
<dbReference type="SUPFAM" id="SSF56574">
    <property type="entry name" value="Serpins"/>
    <property type="match status" value="1"/>
</dbReference>
<dbReference type="PROSITE" id="PS00284">
    <property type="entry name" value="SERPIN"/>
    <property type="match status" value="1"/>
</dbReference>
<evidence type="ECO:0000250" key="1"/>
<evidence type="ECO:0000250" key="2">
    <source>
        <dbReference type="UniProtKB" id="Q96P63"/>
    </source>
</evidence>
<evidence type="ECO:0000256" key="3">
    <source>
        <dbReference type="SAM" id="MobiDB-lite"/>
    </source>
</evidence>
<evidence type="ECO:0000305" key="4"/>
<gene>
    <name type="primary">Serpinb12</name>
</gene>
<organism>
    <name type="scientific">Mus musculus</name>
    <name type="common">Mouse</name>
    <dbReference type="NCBI Taxonomy" id="10090"/>
    <lineage>
        <taxon>Eukaryota</taxon>
        <taxon>Metazoa</taxon>
        <taxon>Chordata</taxon>
        <taxon>Craniata</taxon>
        <taxon>Vertebrata</taxon>
        <taxon>Euteleostomi</taxon>
        <taxon>Mammalia</taxon>
        <taxon>Eutheria</taxon>
        <taxon>Euarchontoglires</taxon>
        <taxon>Glires</taxon>
        <taxon>Rodentia</taxon>
        <taxon>Myomorpha</taxon>
        <taxon>Muroidea</taxon>
        <taxon>Muridae</taxon>
        <taxon>Murinae</taxon>
        <taxon>Mus</taxon>
        <taxon>Mus</taxon>
    </lineage>
</organism>
<protein>
    <recommendedName>
        <fullName>Serpin B12</fullName>
    </recommendedName>
</protein>
<reference key="1">
    <citation type="journal article" date="2004" name="Genomics">
        <title>Comparative genomic analysis of the clade B serpin cluster at human chromosome 18q21: amplification within the mouse squamous cell carcinoma antigen gene locus.</title>
        <authorList>
            <person name="Askew D.J."/>
            <person name="Askew Y.S."/>
            <person name="Kato Y."/>
            <person name="Turner R.F."/>
            <person name="Dewar K."/>
            <person name="Lehoczky J."/>
            <person name="Silverman G.A."/>
        </authorList>
    </citation>
    <scope>NUCLEOTIDE SEQUENCE [MRNA]</scope>
    <source>
        <strain>BALB/cJ</strain>
        <tissue>Lung</tissue>
    </source>
</reference>
<reference key="2">
    <citation type="journal article" date="2005" name="Science">
        <title>The transcriptional landscape of the mammalian genome.</title>
        <authorList>
            <person name="Carninci P."/>
            <person name="Kasukawa T."/>
            <person name="Katayama S."/>
            <person name="Gough J."/>
            <person name="Frith M.C."/>
            <person name="Maeda N."/>
            <person name="Oyama R."/>
            <person name="Ravasi T."/>
            <person name="Lenhard B."/>
            <person name="Wells C."/>
            <person name="Kodzius R."/>
            <person name="Shimokawa K."/>
            <person name="Bajic V.B."/>
            <person name="Brenner S.E."/>
            <person name="Batalov S."/>
            <person name="Forrest A.R."/>
            <person name="Zavolan M."/>
            <person name="Davis M.J."/>
            <person name="Wilming L.G."/>
            <person name="Aidinis V."/>
            <person name="Allen J.E."/>
            <person name="Ambesi-Impiombato A."/>
            <person name="Apweiler R."/>
            <person name="Aturaliya R.N."/>
            <person name="Bailey T.L."/>
            <person name="Bansal M."/>
            <person name="Baxter L."/>
            <person name="Beisel K.W."/>
            <person name="Bersano T."/>
            <person name="Bono H."/>
            <person name="Chalk A.M."/>
            <person name="Chiu K.P."/>
            <person name="Choudhary V."/>
            <person name="Christoffels A."/>
            <person name="Clutterbuck D.R."/>
            <person name="Crowe M.L."/>
            <person name="Dalla E."/>
            <person name="Dalrymple B.P."/>
            <person name="de Bono B."/>
            <person name="Della Gatta G."/>
            <person name="di Bernardo D."/>
            <person name="Down T."/>
            <person name="Engstrom P."/>
            <person name="Fagiolini M."/>
            <person name="Faulkner G."/>
            <person name="Fletcher C.F."/>
            <person name="Fukushima T."/>
            <person name="Furuno M."/>
            <person name="Futaki S."/>
            <person name="Gariboldi M."/>
            <person name="Georgii-Hemming P."/>
            <person name="Gingeras T.R."/>
            <person name="Gojobori T."/>
            <person name="Green R.E."/>
            <person name="Gustincich S."/>
            <person name="Harbers M."/>
            <person name="Hayashi Y."/>
            <person name="Hensch T.K."/>
            <person name="Hirokawa N."/>
            <person name="Hill D."/>
            <person name="Huminiecki L."/>
            <person name="Iacono M."/>
            <person name="Ikeo K."/>
            <person name="Iwama A."/>
            <person name="Ishikawa T."/>
            <person name="Jakt M."/>
            <person name="Kanapin A."/>
            <person name="Katoh M."/>
            <person name="Kawasawa Y."/>
            <person name="Kelso J."/>
            <person name="Kitamura H."/>
            <person name="Kitano H."/>
            <person name="Kollias G."/>
            <person name="Krishnan S.P."/>
            <person name="Kruger A."/>
            <person name="Kummerfeld S.K."/>
            <person name="Kurochkin I.V."/>
            <person name="Lareau L.F."/>
            <person name="Lazarevic D."/>
            <person name="Lipovich L."/>
            <person name="Liu J."/>
            <person name="Liuni S."/>
            <person name="McWilliam S."/>
            <person name="Madan Babu M."/>
            <person name="Madera M."/>
            <person name="Marchionni L."/>
            <person name="Matsuda H."/>
            <person name="Matsuzawa S."/>
            <person name="Miki H."/>
            <person name="Mignone F."/>
            <person name="Miyake S."/>
            <person name="Morris K."/>
            <person name="Mottagui-Tabar S."/>
            <person name="Mulder N."/>
            <person name="Nakano N."/>
            <person name="Nakauchi H."/>
            <person name="Ng P."/>
            <person name="Nilsson R."/>
            <person name="Nishiguchi S."/>
            <person name="Nishikawa S."/>
            <person name="Nori F."/>
            <person name="Ohara O."/>
            <person name="Okazaki Y."/>
            <person name="Orlando V."/>
            <person name="Pang K.C."/>
            <person name="Pavan W.J."/>
            <person name="Pavesi G."/>
            <person name="Pesole G."/>
            <person name="Petrovsky N."/>
            <person name="Piazza S."/>
            <person name="Reed J."/>
            <person name="Reid J.F."/>
            <person name="Ring B.Z."/>
            <person name="Ringwald M."/>
            <person name="Rost B."/>
            <person name="Ruan Y."/>
            <person name="Salzberg S.L."/>
            <person name="Sandelin A."/>
            <person name="Schneider C."/>
            <person name="Schoenbach C."/>
            <person name="Sekiguchi K."/>
            <person name="Semple C.A."/>
            <person name="Seno S."/>
            <person name="Sessa L."/>
            <person name="Sheng Y."/>
            <person name="Shibata Y."/>
            <person name="Shimada H."/>
            <person name="Shimada K."/>
            <person name="Silva D."/>
            <person name="Sinclair B."/>
            <person name="Sperling S."/>
            <person name="Stupka E."/>
            <person name="Sugiura K."/>
            <person name="Sultana R."/>
            <person name="Takenaka Y."/>
            <person name="Taki K."/>
            <person name="Tammoja K."/>
            <person name="Tan S.L."/>
            <person name="Tang S."/>
            <person name="Taylor M.S."/>
            <person name="Tegner J."/>
            <person name="Teichmann S.A."/>
            <person name="Ueda H.R."/>
            <person name="van Nimwegen E."/>
            <person name="Verardo R."/>
            <person name="Wei C.L."/>
            <person name="Yagi K."/>
            <person name="Yamanishi H."/>
            <person name="Zabarovsky E."/>
            <person name="Zhu S."/>
            <person name="Zimmer A."/>
            <person name="Hide W."/>
            <person name="Bult C."/>
            <person name="Grimmond S.M."/>
            <person name="Teasdale R.D."/>
            <person name="Liu E.T."/>
            <person name="Brusic V."/>
            <person name="Quackenbush J."/>
            <person name="Wahlestedt C."/>
            <person name="Mattick J.S."/>
            <person name="Hume D.A."/>
            <person name="Kai C."/>
            <person name="Sasaki D."/>
            <person name="Tomaru Y."/>
            <person name="Fukuda S."/>
            <person name="Kanamori-Katayama M."/>
            <person name="Suzuki M."/>
            <person name="Aoki J."/>
            <person name="Arakawa T."/>
            <person name="Iida J."/>
            <person name="Imamura K."/>
            <person name="Itoh M."/>
            <person name="Kato T."/>
            <person name="Kawaji H."/>
            <person name="Kawagashira N."/>
            <person name="Kawashima T."/>
            <person name="Kojima M."/>
            <person name="Kondo S."/>
            <person name="Konno H."/>
            <person name="Nakano K."/>
            <person name="Ninomiya N."/>
            <person name="Nishio T."/>
            <person name="Okada M."/>
            <person name="Plessy C."/>
            <person name="Shibata K."/>
            <person name="Shiraki T."/>
            <person name="Suzuki S."/>
            <person name="Tagami M."/>
            <person name="Waki K."/>
            <person name="Watahiki A."/>
            <person name="Okamura-Oho Y."/>
            <person name="Suzuki H."/>
            <person name="Kawai J."/>
            <person name="Hayashizaki Y."/>
        </authorList>
    </citation>
    <scope>NUCLEOTIDE SEQUENCE [LARGE SCALE MRNA]</scope>
    <source>
        <strain>C57BL/6J</strain>
        <tissue>Aorta</tissue>
        <tissue>Tongue</tissue>
    </source>
</reference>
<reference key="3">
    <citation type="journal article" date="2004" name="Genome Res.">
        <title>The status, quality, and expansion of the NIH full-length cDNA project: the Mammalian Gene Collection (MGC).</title>
        <authorList>
            <consortium name="The MGC Project Team"/>
        </authorList>
    </citation>
    <scope>NUCLEOTIDE SEQUENCE [LARGE SCALE MRNA]</scope>
    <source>
        <tissue>Jaw</tissue>
        <tissue>Limb</tissue>
    </source>
</reference>
<name>SPB12_MOUSE</name>
<accession>Q9D7P9</accession>
<accession>Q6UKZ3</accession>
<keyword id="KW-0963">Cytoplasm</keyword>
<keyword id="KW-0646">Protease inhibitor</keyword>
<keyword id="KW-1185">Reference proteome</keyword>
<keyword id="KW-0722">Serine protease inhibitor</keyword>